<organism>
    <name type="scientific">Geobacillus sp. (strain WCH70)</name>
    <dbReference type="NCBI Taxonomy" id="471223"/>
    <lineage>
        <taxon>Bacteria</taxon>
        <taxon>Bacillati</taxon>
        <taxon>Bacillota</taxon>
        <taxon>Bacilli</taxon>
        <taxon>Bacillales</taxon>
        <taxon>Anoxybacillaceae</taxon>
        <taxon>Geobacillus</taxon>
    </lineage>
</organism>
<reference key="1">
    <citation type="submission" date="2009-06" db="EMBL/GenBank/DDBJ databases">
        <title>Complete sequence of chromosome of Geopacillus sp. WCH70.</title>
        <authorList>
            <consortium name="US DOE Joint Genome Institute"/>
            <person name="Lucas S."/>
            <person name="Copeland A."/>
            <person name="Lapidus A."/>
            <person name="Glavina del Rio T."/>
            <person name="Dalin E."/>
            <person name="Tice H."/>
            <person name="Bruce D."/>
            <person name="Goodwin L."/>
            <person name="Pitluck S."/>
            <person name="Chertkov O."/>
            <person name="Brettin T."/>
            <person name="Detter J.C."/>
            <person name="Han C."/>
            <person name="Larimer F."/>
            <person name="Land M."/>
            <person name="Hauser L."/>
            <person name="Kyrpides N."/>
            <person name="Mikhailova N."/>
            <person name="Brumm P."/>
            <person name="Mead D.A."/>
            <person name="Richardson P."/>
        </authorList>
    </citation>
    <scope>NUCLEOTIDE SEQUENCE [LARGE SCALE GENOMIC DNA]</scope>
    <source>
        <strain>WCH70</strain>
    </source>
</reference>
<gene>
    <name evidence="1" type="primary">smpB</name>
    <name type="ordered locus">GWCH70_2954</name>
</gene>
<protein>
    <recommendedName>
        <fullName evidence="1">SsrA-binding protein</fullName>
    </recommendedName>
    <alternativeName>
        <fullName evidence="1">Small protein B</fullName>
    </alternativeName>
</protein>
<evidence type="ECO:0000255" key="1">
    <source>
        <dbReference type="HAMAP-Rule" id="MF_00023"/>
    </source>
</evidence>
<name>SSRP_GEOSW</name>
<dbReference type="EMBL" id="CP001638">
    <property type="protein sequence ID" value="ACS25627.1"/>
    <property type="molecule type" value="Genomic_DNA"/>
</dbReference>
<dbReference type="SMR" id="C5D7L7"/>
<dbReference type="STRING" id="471223.GWCH70_2954"/>
<dbReference type="KEGG" id="gwc:GWCH70_2954"/>
<dbReference type="eggNOG" id="COG0691">
    <property type="taxonomic scope" value="Bacteria"/>
</dbReference>
<dbReference type="HOGENOM" id="CLU_108953_0_0_9"/>
<dbReference type="OrthoDB" id="9805462at2"/>
<dbReference type="GO" id="GO:0005829">
    <property type="term" value="C:cytosol"/>
    <property type="evidence" value="ECO:0007669"/>
    <property type="project" value="TreeGrafter"/>
</dbReference>
<dbReference type="GO" id="GO:0003723">
    <property type="term" value="F:RNA binding"/>
    <property type="evidence" value="ECO:0007669"/>
    <property type="project" value="UniProtKB-UniRule"/>
</dbReference>
<dbReference type="GO" id="GO:0070929">
    <property type="term" value="P:trans-translation"/>
    <property type="evidence" value="ECO:0007669"/>
    <property type="project" value="UniProtKB-UniRule"/>
</dbReference>
<dbReference type="CDD" id="cd09294">
    <property type="entry name" value="SmpB"/>
    <property type="match status" value="1"/>
</dbReference>
<dbReference type="Gene3D" id="2.40.280.10">
    <property type="match status" value="1"/>
</dbReference>
<dbReference type="HAMAP" id="MF_00023">
    <property type="entry name" value="SmpB"/>
    <property type="match status" value="1"/>
</dbReference>
<dbReference type="InterPro" id="IPR023620">
    <property type="entry name" value="SmpB"/>
</dbReference>
<dbReference type="InterPro" id="IPR000037">
    <property type="entry name" value="SsrA-bd_prot"/>
</dbReference>
<dbReference type="InterPro" id="IPR020081">
    <property type="entry name" value="SsrA-bd_prot_CS"/>
</dbReference>
<dbReference type="NCBIfam" id="NF003843">
    <property type="entry name" value="PRK05422.1"/>
    <property type="match status" value="1"/>
</dbReference>
<dbReference type="NCBIfam" id="TIGR00086">
    <property type="entry name" value="smpB"/>
    <property type="match status" value="1"/>
</dbReference>
<dbReference type="PANTHER" id="PTHR30308:SF2">
    <property type="entry name" value="SSRA-BINDING PROTEIN"/>
    <property type="match status" value="1"/>
</dbReference>
<dbReference type="PANTHER" id="PTHR30308">
    <property type="entry name" value="TMRNA-BINDING COMPONENT OF TRANS-TRANSLATION TAGGING COMPLEX"/>
    <property type="match status" value="1"/>
</dbReference>
<dbReference type="Pfam" id="PF01668">
    <property type="entry name" value="SmpB"/>
    <property type="match status" value="1"/>
</dbReference>
<dbReference type="SUPFAM" id="SSF74982">
    <property type="entry name" value="Small protein B (SmpB)"/>
    <property type="match status" value="1"/>
</dbReference>
<dbReference type="PROSITE" id="PS01317">
    <property type="entry name" value="SSRP"/>
    <property type="match status" value="1"/>
</dbReference>
<sequence length="155" mass="18194">MPKGEGKLIAQNKKAHHDYFIEETYEAGIVLQGTEIKSIRAGKVNLKDSFAKVEKGEVFLHNMHISPYEQGNRYNHDPLRTRKLLLHRREINKLIGYTKEQGYTLVPLKLYIKNGFAKVLLGVGKGKKKYDKREDMKRREAQREIERAFRERQKL</sequence>
<comment type="function">
    <text evidence="1">Required for rescue of stalled ribosomes mediated by trans-translation. Binds to transfer-messenger RNA (tmRNA), required for stable association of tmRNA with ribosomes. tmRNA and SmpB together mimic tRNA shape, replacing the anticodon stem-loop with SmpB. tmRNA is encoded by the ssrA gene; the 2 termini fold to resemble tRNA(Ala) and it encodes a 'tag peptide', a short internal open reading frame. During trans-translation Ala-aminoacylated tmRNA acts like a tRNA, entering the A-site of stalled ribosomes, displacing the stalled mRNA. The ribosome then switches to translate the ORF on the tmRNA; the nascent peptide is terminated with the 'tag peptide' encoded by the tmRNA and targeted for degradation. The ribosome is freed to recommence translation, which seems to be the essential function of trans-translation.</text>
</comment>
<comment type="subcellular location">
    <subcellularLocation>
        <location evidence="1">Cytoplasm</location>
    </subcellularLocation>
    <text evidence="1">The tmRNA-SmpB complex associates with stalled 70S ribosomes.</text>
</comment>
<comment type="similarity">
    <text evidence="1">Belongs to the SmpB family.</text>
</comment>
<proteinExistence type="inferred from homology"/>
<feature type="chain" id="PRO_1000201935" description="SsrA-binding protein">
    <location>
        <begin position="1"/>
        <end position="155"/>
    </location>
</feature>
<keyword id="KW-0963">Cytoplasm</keyword>
<keyword id="KW-0694">RNA-binding</keyword>
<accession>C5D7L7</accession>